<sequence>MHKEETFNQCALTINGYKSEVKKTYELPGDKSVGHRSLLIGALPKGEYKIRNFPQSRDCLTTLKIMEELGVKVKVLKDYILVNSPGYENFKKKIDYIDCGNSGTTSRLIAGILAGVGVETNLVGDKSLSIRPMKRIVDPLNSMGANIEMEKDHMPLIFKGNGELKGIDYTMEIASAQVKSCILLAGFLSEGVTKVRELSPTRDHTERMLKYIEGNIKIENKEIEIENSTIKSKDIYVPGDISSAAYIIACAILGEDCEIILENVLLNENRRKYLDLLKKMGANLKYLEKNQCNGEHVGNILVKSSFLKGISIGKEITPYIIDEIPIISLIASFAEGKTIFENVEELKYKESDRIKAIMVNLKSLGVKTELVENNLIIYGGLSKINKEINIRTFNDHRIALTFLCSAMRNSEKTYIDNWDCVAISFPNSLNYFKDFFRIN</sequence>
<dbReference type="EC" id="2.5.1.19" evidence="1"/>
<dbReference type="EMBL" id="AE015927">
    <property type="protein sequence ID" value="AAO36160.1"/>
    <property type="molecule type" value="Genomic_DNA"/>
</dbReference>
<dbReference type="SMR" id="Q894D2"/>
<dbReference type="STRING" id="212717.CTC_01617"/>
<dbReference type="KEGG" id="ctc:CTC_01617"/>
<dbReference type="HOGENOM" id="CLU_024321_0_1_9"/>
<dbReference type="OrthoDB" id="9809920at2"/>
<dbReference type="UniPathway" id="UPA00053">
    <property type="reaction ID" value="UER00089"/>
</dbReference>
<dbReference type="Proteomes" id="UP000001412">
    <property type="component" value="Chromosome"/>
</dbReference>
<dbReference type="GO" id="GO:0005737">
    <property type="term" value="C:cytoplasm"/>
    <property type="evidence" value="ECO:0007669"/>
    <property type="project" value="UniProtKB-SubCell"/>
</dbReference>
<dbReference type="GO" id="GO:0003866">
    <property type="term" value="F:3-phosphoshikimate 1-carboxyvinyltransferase activity"/>
    <property type="evidence" value="ECO:0007669"/>
    <property type="project" value="UniProtKB-UniRule"/>
</dbReference>
<dbReference type="GO" id="GO:0008652">
    <property type="term" value="P:amino acid biosynthetic process"/>
    <property type="evidence" value="ECO:0007669"/>
    <property type="project" value="UniProtKB-KW"/>
</dbReference>
<dbReference type="GO" id="GO:0009073">
    <property type="term" value="P:aromatic amino acid family biosynthetic process"/>
    <property type="evidence" value="ECO:0007669"/>
    <property type="project" value="UniProtKB-KW"/>
</dbReference>
<dbReference type="GO" id="GO:0009423">
    <property type="term" value="P:chorismate biosynthetic process"/>
    <property type="evidence" value="ECO:0007669"/>
    <property type="project" value="UniProtKB-UniRule"/>
</dbReference>
<dbReference type="CDD" id="cd01556">
    <property type="entry name" value="EPSP_synthase"/>
    <property type="match status" value="1"/>
</dbReference>
<dbReference type="FunFam" id="3.65.10.10:FF:000005">
    <property type="entry name" value="3-phosphoshikimate 1-carboxyvinyltransferase"/>
    <property type="match status" value="1"/>
</dbReference>
<dbReference type="Gene3D" id="3.65.10.10">
    <property type="entry name" value="Enolpyruvate transferase domain"/>
    <property type="match status" value="2"/>
</dbReference>
<dbReference type="HAMAP" id="MF_00210">
    <property type="entry name" value="EPSP_synth"/>
    <property type="match status" value="1"/>
</dbReference>
<dbReference type="InterPro" id="IPR001986">
    <property type="entry name" value="Enolpyruvate_Tfrase_dom"/>
</dbReference>
<dbReference type="InterPro" id="IPR036968">
    <property type="entry name" value="Enolpyruvate_Tfrase_sf"/>
</dbReference>
<dbReference type="InterPro" id="IPR006264">
    <property type="entry name" value="EPSP_synthase"/>
</dbReference>
<dbReference type="InterPro" id="IPR023193">
    <property type="entry name" value="EPSP_synthase_CS"/>
</dbReference>
<dbReference type="InterPro" id="IPR013792">
    <property type="entry name" value="RNA3'P_cycl/enolpyr_Trfase_a/b"/>
</dbReference>
<dbReference type="NCBIfam" id="TIGR01356">
    <property type="entry name" value="aroA"/>
    <property type="match status" value="1"/>
</dbReference>
<dbReference type="PANTHER" id="PTHR21090">
    <property type="entry name" value="AROM/DEHYDROQUINATE SYNTHASE"/>
    <property type="match status" value="1"/>
</dbReference>
<dbReference type="PANTHER" id="PTHR21090:SF5">
    <property type="entry name" value="PENTAFUNCTIONAL AROM POLYPEPTIDE"/>
    <property type="match status" value="1"/>
</dbReference>
<dbReference type="Pfam" id="PF00275">
    <property type="entry name" value="EPSP_synthase"/>
    <property type="match status" value="1"/>
</dbReference>
<dbReference type="PIRSF" id="PIRSF000505">
    <property type="entry name" value="EPSPS"/>
    <property type="match status" value="1"/>
</dbReference>
<dbReference type="SUPFAM" id="SSF55205">
    <property type="entry name" value="EPT/RTPC-like"/>
    <property type="match status" value="1"/>
</dbReference>
<dbReference type="PROSITE" id="PS00104">
    <property type="entry name" value="EPSP_SYNTHASE_1"/>
    <property type="match status" value="1"/>
</dbReference>
<dbReference type="PROSITE" id="PS00885">
    <property type="entry name" value="EPSP_SYNTHASE_2"/>
    <property type="match status" value="1"/>
</dbReference>
<organism>
    <name type="scientific">Clostridium tetani (strain Massachusetts / E88)</name>
    <dbReference type="NCBI Taxonomy" id="212717"/>
    <lineage>
        <taxon>Bacteria</taxon>
        <taxon>Bacillati</taxon>
        <taxon>Bacillota</taxon>
        <taxon>Clostridia</taxon>
        <taxon>Eubacteriales</taxon>
        <taxon>Clostridiaceae</taxon>
        <taxon>Clostridium</taxon>
    </lineage>
</organism>
<protein>
    <recommendedName>
        <fullName evidence="1">3-phosphoshikimate 1-carboxyvinyltransferase</fullName>
        <ecNumber evidence="1">2.5.1.19</ecNumber>
    </recommendedName>
    <alternativeName>
        <fullName evidence="1">5-enolpyruvylshikimate-3-phosphate synthase</fullName>
        <shortName evidence="1">EPSP synthase</shortName>
        <shortName evidence="1">EPSPS</shortName>
    </alternativeName>
</protein>
<evidence type="ECO:0000255" key="1">
    <source>
        <dbReference type="HAMAP-Rule" id="MF_00210"/>
    </source>
</evidence>
<name>AROA_CLOTE</name>
<gene>
    <name evidence="1" type="primary">aroA</name>
    <name type="ordered locus">CTC_01617</name>
</gene>
<accession>Q894D2</accession>
<keyword id="KW-0028">Amino-acid biosynthesis</keyword>
<keyword id="KW-0057">Aromatic amino acid biosynthesis</keyword>
<keyword id="KW-0963">Cytoplasm</keyword>
<keyword id="KW-1185">Reference proteome</keyword>
<keyword id="KW-0808">Transferase</keyword>
<feature type="chain" id="PRO_0000088249" description="3-phosphoshikimate 1-carboxyvinyltransferase">
    <location>
        <begin position="1"/>
        <end position="439"/>
    </location>
</feature>
<feature type="active site" description="Proton acceptor" evidence="1">
    <location>
        <position position="322"/>
    </location>
</feature>
<feature type="binding site" evidence="1">
    <location>
        <position position="31"/>
    </location>
    <ligand>
        <name>3-phosphoshikimate</name>
        <dbReference type="ChEBI" id="CHEBI:145989"/>
    </ligand>
</feature>
<feature type="binding site" evidence="1">
    <location>
        <position position="31"/>
    </location>
    <ligand>
        <name>phosphoenolpyruvate</name>
        <dbReference type="ChEBI" id="CHEBI:58702"/>
    </ligand>
</feature>
<feature type="binding site" evidence="1">
    <location>
        <position position="32"/>
    </location>
    <ligand>
        <name>3-phosphoshikimate</name>
        <dbReference type="ChEBI" id="CHEBI:145989"/>
    </ligand>
</feature>
<feature type="binding site" evidence="1">
    <location>
        <position position="36"/>
    </location>
    <ligand>
        <name>3-phosphoshikimate</name>
        <dbReference type="ChEBI" id="CHEBI:145989"/>
    </ligand>
</feature>
<feature type="binding site" evidence="1">
    <location>
        <position position="103"/>
    </location>
    <ligand>
        <name>phosphoenolpyruvate</name>
        <dbReference type="ChEBI" id="CHEBI:58702"/>
    </ligand>
</feature>
<feature type="binding site" evidence="1">
    <location>
        <position position="131"/>
    </location>
    <ligand>
        <name>phosphoenolpyruvate</name>
        <dbReference type="ChEBI" id="CHEBI:58702"/>
    </ligand>
</feature>
<feature type="binding site" evidence="1">
    <location>
        <position position="175"/>
    </location>
    <ligand>
        <name>3-phosphoshikimate</name>
        <dbReference type="ChEBI" id="CHEBI:145989"/>
    </ligand>
</feature>
<feature type="binding site" evidence="1">
    <location>
        <position position="177"/>
    </location>
    <ligand>
        <name>3-phosphoshikimate</name>
        <dbReference type="ChEBI" id="CHEBI:145989"/>
    </ligand>
</feature>
<feature type="binding site" evidence="1">
    <location>
        <position position="177"/>
    </location>
    <ligand>
        <name>phosphoenolpyruvate</name>
        <dbReference type="ChEBI" id="CHEBI:58702"/>
    </ligand>
</feature>
<feature type="binding site" evidence="1">
    <location>
        <position position="322"/>
    </location>
    <ligand>
        <name>3-phosphoshikimate</name>
        <dbReference type="ChEBI" id="CHEBI:145989"/>
    </ligand>
</feature>
<feature type="binding site" evidence="1">
    <location>
        <position position="349"/>
    </location>
    <ligand>
        <name>3-phosphoshikimate</name>
        <dbReference type="ChEBI" id="CHEBI:145989"/>
    </ligand>
</feature>
<feature type="binding site" evidence="1">
    <location>
        <position position="353"/>
    </location>
    <ligand>
        <name>phosphoenolpyruvate</name>
        <dbReference type="ChEBI" id="CHEBI:58702"/>
    </ligand>
</feature>
<feature type="binding site" evidence="1">
    <location>
        <position position="397"/>
    </location>
    <ligand>
        <name>phosphoenolpyruvate</name>
        <dbReference type="ChEBI" id="CHEBI:58702"/>
    </ligand>
</feature>
<proteinExistence type="inferred from homology"/>
<reference key="1">
    <citation type="journal article" date="2003" name="Proc. Natl. Acad. Sci. U.S.A.">
        <title>The genome sequence of Clostridium tetani, the causative agent of tetanus disease.</title>
        <authorList>
            <person name="Brueggemann H."/>
            <person name="Baeumer S."/>
            <person name="Fricke W.F."/>
            <person name="Wiezer A."/>
            <person name="Liesegang H."/>
            <person name="Decker I."/>
            <person name="Herzberg C."/>
            <person name="Martinez-Arias R."/>
            <person name="Merkl R."/>
            <person name="Henne A."/>
            <person name="Gottschalk G."/>
        </authorList>
    </citation>
    <scope>NUCLEOTIDE SEQUENCE [LARGE SCALE GENOMIC DNA]</scope>
    <source>
        <strain>Massachusetts / E88</strain>
    </source>
</reference>
<comment type="function">
    <text evidence="1">Catalyzes the transfer of the enolpyruvyl moiety of phosphoenolpyruvate (PEP) to the 5-hydroxyl of shikimate-3-phosphate (S3P) to produce enolpyruvyl shikimate-3-phosphate and inorganic phosphate.</text>
</comment>
<comment type="catalytic activity">
    <reaction evidence="1">
        <text>3-phosphoshikimate + phosphoenolpyruvate = 5-O-(1-carboxyvinyl)-3-phosphoshikimate + phosphate</text>
        <dbReference type="Rhea" id="RHEA:21256"/>
        <dbReference type="ChEBI" id="CHEBI:43474"/>
        <dbReference type="ChEBI" id="CHEBI:57701"/>
        <dbReference type="ChEBI" id="CHEBI:58702"/>
        <dbReference type="ChEBI" id="CHEBI:145989"/>
        <dbReference type="EC" id="2.5.1.19"/>
    </reaction>
    <physiologicalReaction direction="left-to-right" evidence="1">
        <dbReference type="Rhea" id="RHEA:21257"/>
    </physiologicalReaction>
</comment>
<comment type="pathway">
    <text evidence="1">Metabolic intermediate biosynthesis; chorismate biosynthesis; chorismate from D-erythrose 4-phosphate and phosphoenolpyruvate: step 6/7.</text>
</comment>
<comment type="subunit">
    <text evidence="1">Monomer.</text>
</comment>
<comment type="subcellular location">
    <subcellularLocation>
        <location evidence="1">Cytoplasm</location>
    </subcellularLocation>
</comment>
<comment type="similarity">
    <text evidence="1">Belongs to the EPSP synthase family.</text>
</comment>